<comment type="function">
    <text evidence="1">Catalyzes the transfer of the phosphoribosyl group of 5-phosphorylribose-1-pyrophosphate (PRPP) to anthranilate to yield N-(5'-phosphoribosyl)-anthranilate (PRA).</text>
</comment>
<comment type="catalytic activity">
    <reaction evidence="1">
        <text>N-(5-phospho-beta-D-ribosyl)anthranilate + diphosphate = 5-phospho-alpha-D-ribose 1-diphosphate + anthranilate</text>
        <dbReference type="Rhea" id="RHEA:11768"/>
        <dbReference type="ChEBI" id="CHEBI:16567"/>
        <dbReference type="ChEBI" id="CHEBI:18277"/>
        <dbReference type="ChEBI" id="CHEBI:33019"/>
        <dbReference type="ChEBI" id="CHEBI:58017"/>
        <dbReference type="EC" id="2.4.2.18"/>
    </reaction>
</comment>
<comment type="cofactor">
    <cofactor evidence="1">
        <name>Mg(2+)</name>
        <dbReference type="ChEBI" id="CHEBI:18420"/>
    </cofactor>
    <text evidence="1">Binds 2 magnesium ions per monomer.</text>
</comment>
<comment type="pathway">
    <text evidence="1">Amino-acid biosynthesis; L-tryptophan biosynthesis; L-tryptophan from chorismate: step 2/5.</text>
</comment>
<comment type="subunit">
    <text evidence="1">Homodimer.</text>
</comment>
<comment type="similarity">
    <text evidence="1">Belongs to the anthranilate phosphoribosyltransferase family.</text>
</comment>
<protein>
    <recommendedName>
        <fullName evidence="1">Anthranilate phosphoribosyltransferase</fullName>
        <ecNumber evidence="1">2.4.2.18</ecNumber>
    </recommendedName>
</protein>
<feature type="chain" id="PRO_1000042999" description="Anthranilate phosphoribosyltransferase">
    <location>
        <begin position="1"/>
        <end position="343"/>
    </location>
</feature>
<feature type="binding site" evidence="1">
    <location>
        <position position="84"/>
    </location>
    <ligand>
        <name>5-phospho-alpha-D-ribose 1-diphosphate</name>
        <dbReference type="ChEBI" id="CHEBI:58017"/>
    </ligand>
</feature>
<feature type="binding site" evidence="1">
    <location>
        <position position="84"/>
    </location>
    <ligand>
        <name>anthranilate</name>
        <dbReference type="ChEBI" id="CHEBI:16567"/>
        <label>1</label>
    </ligand>
</feature>
<feature type="binding site" evidence="1">
    <location>
        <begin position="87"/>
        <end position="88"/>
    </location>
    <ligand>
        <name>5-phospho-alpha-D-ribose 1-diphosphate</name>
        <dbReference type="ChEBI" id="CHEBI:58017"/>
    </ligand>
</feature>
<feature type="binding site" evidence="1">
    <location>
        <position position="92"/>
    </location>
    <ligand>
        <name>5-phospho-alpha-D-ribose 1-diphosphate</name>
        <dbReference type="ChEBI" id="CHEBI:58017"/>
    </ligand>
</feature>
<feature type="binding site" evidence="1">
    <location>
        <begin position="94"/>
        <end position="97"/>
    </location>
    <ligand>
        <name>5-phospho-alpha-D-ribose 1-diphosphate</name>
        <dbReference type="ChEBI" id="CHEBI:58017"/>
    </ligand>
</feature>
<feature type="binding site" evidence="1">
    <location>
        <position position="96"/>
    </location>
    <ligand>
        <name>Mg(2+)</name>
        <dbReference type="ChEBI" id="CHEBI:18420"/>
        <label>1</label>
    </ligand>
</feature>
<feature type="binding site" evidence="1">
    <location>
        <begin position="112"/>
        <end position="120"/>
    </location>
    <ligand>
        <name>5-phospho-alpha-D-ribose 1-diphosphate</name>
        <dbReference type="ChEBI" id="CHEBI:58017"/>
    </ligand>
</feature>
<feature type="binding site" evidence="1">
    <location>
        <position position="115"/>
    </location>
    <ligand>
        <name>anthranilate</name>
        <dbReference type="ChEBI" id="CHEBI:16567"/>
        <label>1</label>
    </ligand>
</feature>
<feature type="binding site" evidence="1">
    <location>
        <position position="124"/>
    </location>
    <ligand>
        <name>5-phospho-alpha-D-ribose 1-diphosphate</name>
        <dbReference type="ChEBI" id="CHEBI:58017"/>
    </ligand>
</feature>
<feature type="binding site" evidence="1">
    <location>
        <position position="170"/>
    </location>
    <ligand>
        <name>anthranilate</name>
        <dbReference type="ChEBI" id="CHEBI:16567"/>
        <label>2</label>
    </ligand>
</feature>
<feature type="binding site" evidence="1">
    <location>
        <position position="229"/>
    </location>
    <ligand>
        <name>Mg(2+)</name>
        <dbReference type="ChEBI" id="CHEBI:18420"/>
        <label>2</label>
    </ligand>
</feature>
<feature type="binding site" evidence="1">
    <location>
        <position position="230"/>
    </location>
    <ligand>
        <name>Mg(2+)</name>
        <dbReference type="ChEBI" id="CHEBI:18420"/>
        <label>1</label>
    </ligand>
</feature>
<feature type="binding site" evidence="1">
    <location>
        <position position="230"/>
    </location>
    <ligand>
        <name>Mg(2+)</name>
        <dbReference type="ChEBI" id="CHEBI:18420"/>
        <label>2</label>
    </ligand>
</feature>
<keyword id="KW-0028">Amino-acid biosynthesis</keyword>
<keyword id="KW-0057">Aromatic amino acid biosynthesis</keyword>
<keyword id="KW-0328">Glycosyltransferase</keyword>
<keyword id="KW-0460">Magnesium</keyword>
<keyword id="KW-0479">Metal-binding</keyword>
<keyword id="KW-0808">Transferase</keyword>
<keyword id="KW-0822">Tryptophan biosynthesis</keyword>
<accession>A3NZP5</accession>
<sequence>MTITPQEALQRTIEHREIFHDEMLHLMRLIMRGDMSPVMAAAIITGLRVKKETIGEIAAAATVMREFARRVEVEDNANFVDIVGTGGDGSHTFNISTATMFVAAAAGAKVAKHGNRGVSSKSGSADVLEALGVNIDLQPEQVAASIAETGMGFMFAPNHHPAMRNIAPVRRELGVRTIFNILGPLTNPADAPNQLMGVFHPDLVGIQVRVMQRLGAQHVLVVYGKDGMDEVSLGAATLVGELRDGEVREYEIHPEDFGMQMVSNRTLKVESADESRVMLLEALGNKPGVAREIVTLNAGTALYSADVAGSIADGIQLARDAIASGRAREKVDELVRFTQQFKR</sequence>
<reference key="1">
    <citation type="journal article" date="2010" name="Genome Biol. Evol.">
        <title>Continuing evolution of Burkholderia mallei through genome reduction and large-scale rearrangements.</title>
        <authorList>
            <person name="Losada L."/>
            <person name="Ronning C.M."/>
            <person name="DeShazer D."/>
            <person name="Woods D."/>
            <person name="Fedorova N."/>
            <person name="Kim H.S."/>
            <person name="Shabalina S.A."/>
            <person name="Pearson T.R."/>
            <person name="Brinkac L."/>
            <person name="Tan P."/>
            <person name="Nandi T."/>
            <person name="Crabtree J."/>
            <person name="Badger J."/>
            <person name="Beckstrom-Sternberg S."/>
            <person name="Saqib M."/>
            <person name="Schutzer S.E."/>
            <person name="Keim P."/>
            <person name="Nierman W.C."/>
        </authorList>
    </citation>
    <scope>NUCLEOTIDE SEQUENCE [LARGE SCALE GENOMIC DNA]</scope>
    <source>
        <strain>1106a</strain>
    </source>
</reference>
<dbReference type="EC" id="2.4.2.18" evidence="1"/>
<dbReference type="EMBL" id="CP000572">
    <property type="protein sequence ID" value="ABN90952.1"/>
    <property type="molecule type" value="Genomic_DNA"/>
</dbReference>
<dbReference type="RefSeq" id="WP_004186823.1">
    <property type="nucleotide sequence ID" value="NC_009076.1"/>
</dbReference>
<dbReference type="SMR" id="A3NZP5"/>
<dbReference type="GeneID" id="93061660"/>
<dbReference type="KEGG" id="bpl:BURPS1106A_3585"/>
<dbReference type="HOGENOM" id="CLU_034315_2_1_4"/>
<dbReference type="UniPathway" id="UPA00035">
    <property type="reaction ID" value="UER00041"/>
</dbReference>
<dbReference type="Proteomes" id="UP000006738">
    <property type="component" value="Chromosome I"/>
</dbReference>
<dbReference type="GO" id="GO:0005829">
    <property type="term" value="C:cytosol"/>
    <property type="evidence" value="ECO:0007669"/>
    <property type="project" value="TreeGrafter"/>
</dbReference>
<dbReference type="GO" id="GO:0004048">
    <property type="term" value="F:anthranilate phosphoribosyltransferase activity"/>
    <property type="evidence" value="ECO:0007669"/>
    <property type="project" value="UniProtKB-UniRule"/>
</dbReference>
<dbReference type="GO" id="GO:0000287">
    <property type="term" value="F:magnesium ion binding"/>
    <property type="evidence" value="ECO:0007669"/>
    <property type="project" value="UniProtKB-UniRule"/>
</dbReference>
<dbReference type="GO" id="GO:0000162">
    <property type="term" value="P:L-tryptophan biosynthetic process"/>
    <property type="evidence" value="ECO:0007669"/>
    <property type="project" value="UniProtKB-UniRule"/>
</dbReference>
<dbReference type="FunFam" id="1.20.970.10:FF:000006">
    <property type="entry name" value="Anthranilate phosphoribosyltransferase"/>
    <property type="match status" value="1"/>
</dbReference>
<dbReference type="FunFam" id="3.40.1030.10:FF:000002">
    <property type="entry name" value="Anthranilate phosphoribosyltransferase"/>
    <property type="match status" value="1"/>
</dbReference>
<dbReference type="Gene3D" id="3.40.1030.10">
    <property type="entry name" value="Nucleoside phosphorylase/phosphoribosyltransferase catalytic domain"/>
    <property type="match status" value="1"/>
</dbReference>
<dbReference type="Gene3D" id="1.20.970.10">
    <property type="entry name" value="Transferase, Pyrimidine Nucleoside Phosphorylase, Chain C"/>
    <property type="match status" value="1"/>
</dbReference>
<dbReference type="HAMAP" id="MF_00211">
    <property type="entry name" value="TrpD"/>
    <property type="match status" value="1"/>
</dbReference>
<dbReference type="InterPro" id="IPR005940">
    <property type="entry name" value="Anthranilate_Pribosyl_Tfrase"/>
</dbReference>
<dbReference type="InterPro" id="IPR000312">
    <property type="entry name" value="Glycosyl_Trfase_fam3"/>
</dbReference>
<dbReference type="InterPro" id="IPR017459">
    <property type="entry name" value="Glycosyl_Trfase_fam3_N_dom"/>
</dbReference>
<dbReference type="InterPro" id="IPR036320">
    <property type="entry name" value="Glycosyl_Trfase_fam3_N_dom_sf"/>
</dbReference>
<dbReference type="InterPro" id="IPR035902">
    <property type="entry name" value="Nuc_phospho_transferase"/>
</dbReference>
<dbReference type="NCBIfam" id="TIGR01245">
    <property type="entry name" value="trpD"/>
    <property type="match status" value="1"/>
</dbReference>
<dbReference type="PANTHER" id="PTHR43285">
    <property type="entry name" value="ANTHRANILATE PHOSPHORIBOSYLTRANSFERASE"/>
    <property type="match status" value="1"/>
</dbReference>
<dbReference type="PANTHER" id="PTHR43285:SF2">
    <property type="entry name" value="ANTHRANILATE PHOSPHORIBOSYLTRANSFERASE"/>
    <property type="match status" value="1"/>
</dbReference>
<dbReference type="Pfam" id="PF02885">
    <property type="entry name" value="Glycos_trans_3N"/>
    <property type="match status" value="1"/>
</dbReference>
<dbReference type="Pfam" id="PF00591">
    <property type="entry name" value="Glycos_transf_3"/>
    <property type="match status" value="1"/>
</dbReference>
<dbReference type="SUPFAM" id="SSF52418">
    <property type="entry name" value="Nucleoside phosphorylase/phosphoribosyltransferase catalytic domain"/>
    <property type="match status" value="1"/>
</dbReference>
<dbReference type="SUPFAM" id="SSF47648">
    <property type="entry name" value="Nucleoside phosphorylase/phosphoribosyltransferase N-terminal domain"/>
    <property type="match status" value="1"/>
</dbReference>
<name>TRPD_BURP0</name>
<evidence type="ECO:0000255" key="1">
    <source>
        <dbReference type="HAMAP-Rule" id="MF_00211"/>
    </source>
</evidence>
<gene>
    <name evidence="1" type="primary">trpD</name>
    <name type="ordered locus">BURPS1106A_3585</name>
</gene>
<organism>
    <name type="scientific">Burkholderia pseudomallei (strain 1106a)</name>
    <dbReference type="NCBI Taxonomy" id="357348"/>
    <lineage>
        <taxon>Bacteria</taxon>
        <taxon>Pseudomonadati</taxon>
        <taxon>Pseudomonadota</taxon>
        <taxon>Betaproteobacteria</taxon>
        <taxon>Burkholderiales</taxon>
        <taxon>Burkholderiaceae</taxon>
        <taxon>Burkholderia</taxon>
        <taxon>pseudomallei group</taxon>
    </lineage>
</organism>
<proteinExistence type="inferred from homology"/>